<feature type="chain" id="PRO_0000143862" description="Uridylate kinase">
    <location>
        <begin position="1"/>
        <end position="255"/>
    </location>
</feature>
<feature type="region of interest" description="Disordered" evidence="2">
    <location>
        <begin position="1"/>
        <end position="21"/>
    </location>
</feature>
<feature type="binding site" evidence="1">
    <location>
        <begin position="30"/>
        <end position="33"/>
    </location>
    <ligand>
        <name>ATP</name>
        <dbReference type="ChEBI" id="CHEBI:30616"/>
    </ligand>
</feature>
<feature type="binding site" evidence="1">
    <location>
        <position position="71"/>
    </location>
    <ligand>
        <name>UMP</name>
        <dbReference type="ChEBI" id="CHEBI:57865"/>
    </ligand>
</feature>
<feature type="binding site" evidence="1">
    <location>
        <position position="72"/>
    </location>
    <ligand>
        <name>ATP</name>
        <dbReference type="ChEBI" id="CHEBI:30616"/>
    </ligand>
</feature>
<feature type="binding site" evidence="1">
    <location>
        <position position="76"/>
    </location>
    <ligand>
        <name>ATP</name>
        <dbReference type="ChEBI" id="CHEBI:30616"/>
    </ligand>
</feature>
<feature type="binding site" evidence="1">
    <location>
        <position position="91"/>
    </location>
    <ligand>
        <name>UMP</name>
        <dbReference type="ChEBI" id="CHEBI:57865"/>
    </ligand>
</feature>
<feature type="binding site" evidence="1">
    <location>
        <begin position="152"/>
        <end position="159"/>
    </location>
    <ligand>
        <name>UMP</name>
        <dbReference type="ChEBI" id="CHEBI:57865"/>
    </ligand>
</feature>
<feature type="binding site" evidence="1">
    <location>
        <position position="185"/>
    </location>
    <ligand>
        <name>ATP</name>
        <dbReference type="ChEBI" id="CHEBI:30616"/>
    </ligand>
</feature>
<feature type="binding site" evidence="1">
    <location>
        <position position="188"/>
    </location>
    <ligand>
        <name>ATP</name>
        <dbReference type="ChEBI" id="CHEBI:30616"/>
    </ligand>
</feature>
<accession>O33045</accession>
<evidence type="ECO:0000255" key="1">
    <source>
        <dbReference type="HAMAP-Rule" id="MF_01220"/>
    </source>
</evidence>
<evidence type="ECO:0000256" key="2">
    <source>
        <dbReference type="SAM" id="MobiDB-lite"/>
    </source>
</evidence>
<evidence type="ECO:0000305" key="3"/>
<sequence>MSAAAAGRGERLNHAGNPGHRSKYSRVLLKLGGEMFGGGQVGLDLDVVAQVARQIAEVVRGGVQVAVVIGGGNFFRGAQLQQRGMERTRSDYMGMLGTVMNSLALQDFLEKEGIATRVQTAITMGQVAEPYLPLRAVRHLEKGRVVIFGAGMGLPYFSTDTTAAQRALEIGADVVLMAKAVDGVFVEDPRVNPEAELLTAISHREVIDRGLRVADATAFSLCMDNGMPILVFNLLTNGNIARAVAGEKIGTLVTT</sequence>
<keyword id="KW-0067">ATP-binding</keyword>
<keyword id="KW-0963">Cytoplasm</keyword>
<keyword id="KW-0418">Kinase</keyword>
<keyword id="KW-0547">Nucleotide-binding</keyword>
<keyword id="KW-0665">Pyrimidine biosynthesis</keyword>
<keyword id="KW-1185">Reference proteome</keyword>
<keyword id="KW-0808">Transferase</keyword>
<gene>
    <name evidence="1" type="primary">pyrH</name>
    <name type="ordered locus">ML1591</name>
    <name type="ORF">MLCB250.75</name>
</gene>
<dbReference type="EC" id="2.7.4.22" evidence="1"/>
<dbReference type="EMBL" id="Z97369">
    <property type="protein sequence ID" value="CAB10669.1"/>
    <property type="status" value="ALT_INIT"/>
    <property type="molecule type" value="Genomic_DNA"/>
</dbReference>
<dbReference type="EMBL" id="AL583922">
    <property type="protein sequence ID" value="CAC30542.1"/>
    <property type="status" value="ALT_INIT"/>
    <property type="molecule type" value="Genomic_DNA"/>
</dbReference>
<dbReference type="PIR" id="A87108">
    <property type="entry name" value="A87108"/>
</dbReference>
<dbReference type="RefSeq" id="WP_010908419.1">
    <property type="nucleotide sequence ID" value="NC_002677.1"/>
</dbReference>
<dbReference type="SMR" id="O33045"/>
<dbReference type="STRING" id="272631.gene:17575432"/>
<dbReference type="KEGG" id="mle:ML1591"/>
<dbReference type="Leproma" id="ML1591"/>
<dbReference type="eggNOG" id="COG0528">
    <property type="taxonomic scope" value="Bacteria"/>
</dbReference>
<dbReference type="HOGENOM" id="CLU_033861_0_0_11"/>
<dbReference type="UniPathway" id="UPA00159">
    <property type="reaction ID" value="UER00275"/>
</dbReference>
<dbReference type="Proteomes" id="UP000000806">
    <property type="component" value="Chromosome"/>
</dbReference>
<dbReference type="GO" id="GO:0005737">
    <property type="term" value="C:cytoplasm"/>
    <property type="evidence" value="ECO:0007669"/>
    <property type="project" value="UniProtKB-SubCell"/>
</dbReference>
<dbReference type="GO" id="GO:0005524">
    <property type="term" value="F:ATP binding"/>
    <property type="evidence" value="ECO:0007669"/>
    <property type="project" value="UniProtKB-KW"/>
</dbReference>
<dbReference type="GO" id="GO:0033862">
    <property type="term" value="F:UMP kinase activity"/>
    <property type="evidence" value="ECO:0007669"/>
    <property type="project" value="UniProtKB-EC"/>
</dbReference>
<dbReference type="GO" id="GO:0044210">
    <property type="term" value="P:'de novo' CTP biosynthetic process"/>
    <property type="evidence" value="ECO:0007669"/>
    <property type="project" value="UniProtKB-UniRule"/>
</dbReference>
<dbReference type="GO" id="GO:0006225">
    <property type="term" value="P:UDP biosynthetic process"/>
    <property type="evidence" value="ECO:0007669"/>
    <property type="project" value="TreeGrafter"/>
</dbReference>
<dbReference type="CDD" id="cd04254">
    <property type="entry name" value="AAK_UMPK-PyrH-Ec"/>
    <property type="match status" value="1"/>
</dbReference>
<dbReference type="FunFam" id="3.40.1160.10:FF:000001">
    <property type="entry name" value="Uridylate kinase"/>
    <property type="match status" value="1"/>
</dbReference>
<dbReference type="Gene3D" id="3.40.1160.10">
    <property type="entry name" value="Acetylglutamate kinase-like"/>
    <property type="match status" value="1"/>
</dbReference>
<dbReference type="HAMAP" id="MF_01220_B">
    <property type="entry name" value="PyrH_B"/>
    <property type="match status" value="1"/>
</dbReference>
<dbReference type="InterPro" id="IPR036393">
    <property type="entry name" value="AceGlu_kinase-like_sf"/>
</dbReference>
<dbReference type="InterPro" id="IPR001048">
    <property type="entry name" value="Asp/Glu/Uridylate_kinase"/>
</dbReference>
<dbReference type="InterPro" id="IPR011817">
    <property type="entry name" value="Uridylate_kinase"/>
</dbReference>
<dbReference type="InterPro" id="IPR015963">
    <property type="entry name" value="Uridylate_kinase_bac"/>
</dbReference>
<dbReference type="NCBIfam" id="TIGR02075">
    <property type="entry name" value="pyrH_bact"/>
    <property type="match status" value="1"/>
</dbReference>
<dbReference type="PANTHER" id="PTHR42833">
    <property type="entry name" value="URIDYLATE KINASE"/>
    <property type="match status" value="1"/>
</dbReference>
<dbReference type="PANTHER" id="PTHR42833:SF4">
    <property type="entry name" value="URIDYLATE KINASE PUMPKIN, CHLOROPLASTIC"/>
    <property type="match status" value="1"/>
</dbReference>
<dbReference type="Pfam" id="PF00696">
    <property type="entry name" value="AA_kinase"/>
    <property type="match status" value="1"/>
</dbReference>
<dbReference type="PIRSF" id="PIRSF005650">
    <property type="entry name" value="Uridylate_kin"/>
    <property type="match status" value="1"/>
</dbReference>
<dbReference type="SUPFAM" id="SSF53633">
    <property type="entry name" value="Carbamate kinase-like"/>
    <property type="match status" value="1"/>
</dbReference>
<proteinExistence type="inferred from homology"/>
<comment type="function">
    <text evidence="1">Catalyzes the reversible phosphorylation of UMP to UDP.</text>
</comment>
<comment type="catalytic activity">
    <reaction evidence="1">
        <text>UMP + ATP = UDP + ADP</text>
        <dbReference type="Rhea" id="RHEA:24400"/>
        <dbReference type="ChEBI" id="CHEBI:30616"/>
        <dbReference type="ChEBI" id="CHEBI:57865"/>
        <dbReference type="ChEBI" id="CHEBI:58223"/>
        <dbReference type="ChEBI" id="CHEBI:456216"/>
        <dbReference type="EC" id="2.7.4.22"/>
    </reaction>
</comment>
<comment type="activity regulation">
    <text evidence="1">Inhibited by UTP.</text>
</comment>
<comment type="pathway">
    <text evidence="1">Pyrimidine metabolism; CTP biosynthesis via de novo pathway; UDP from UMP (UMPK route): step 1/1.</text>
</comment>
<comment type="subunit">
    <text evidence="1">Homohexamer.</text>
</comment>
<comment type="subcellular location">
    <subcellularLocation>
        <location evidence="1">Cytoplasm</location>
    </subcellularLocation>
</comment>
<comment type="similarity">
    <text evidence="1">Belongs to the UMP kinase family.</text>
</comment>
<comment type="sequence caution" evidence="3">
    <conflict type="erroneous initiation">
        <sequence resource="EMBL-CDS" id="CAB10669"/>
    </conflict>
</comment>
<comment type="sequence caution" evidence="3">
    <conflict type="erroneous initiation">
        <sequence resource="EMBL-CDS" id="CAC30542"/>
    </conflict>
</comment>
<reference key="1">
    <citation type="journal article" date="2001" name="Nature">
        <title>Massive gene decay in the leprosy bacillus.</title>
        <authorList>
            <person name="Cole S.T."/>
            <person name="Eiglmeier K."/>
            <person name="Parkhill J."/>
            <person name="James K.D."/>
            <person name="Thomson N.R."/>
            <person name="Wheeler P.R."/>
            <person name="Honore N."/>
            <person name="Garnier T."/>
            <person name="Churcher C.M."/>
            <person name="Harris D.E."/>
            <person name="Mungall K.L."/>
            <person name="Basham D."/>
            <person name="Brown D."/>
            <person name="Chillingworth T."/>
            <person name="Connor R."/>
            <person name="Davies R.M."/>
            <person name="Devlin K."/>
            <person name="Duthoy S."/>
            <person name="Feltwell T."/>
            <person name="Fraser A."/>
            <person name="Hamlin N."/>
            <person name="Holroyd S."/>
            <person name="Hornsby T."/>
            <person name="Jagels K."/>
            <person name="Lacroix C."/>
            <person name="Maclean J."/>
            <person name="Moule S."/>
            <person name="Murphy L.D."/>
            <person name="Oliver K."/>
            <person name="Quail M.A."/>
            <person name="Rajandream M.A."/>
            <person name="Rutherford K.M."/>
            <person name="Rutter S."/>
            <person name="Seeger K."/>
            <person name="Simon S."/>
            <person name="Simmonds M."/>
            <person name="Skelton J."/>
            <person name="Squares R."/>
            <person name="Squares S."/>
            <person name="Stevens K."/>
            <person name="Taylor K."/>
            <person name="Whitehead S."/>
            <person name="Woodward J.R."/>
            <person name="Barrell B.G."/>
        </authorList>
    </citation>
    <scope>NUCLEOTIDE SEQUENCE [LARGE SCALE GENOMIC DNA]</scope>
    <source>
        <strain>TN</strain>
    </source>
</reference>
<protein>
    <recommendedName>
        <fullName evidence="1">Uridylate kinase</fullName>
        <shortName evidence="1">UK</shortName>
        <ecNumber evidence="1">2.7.4.22</ecNumber>
    </recommendedName>
    <alternativeName>
        <fullName evidence="1">Uridine monophosphate kinase</fullName>
        <shortName evidence="1">UMP kinase</shortName>
        <shortName evidence="1">UMPK</shortName>
    </alternativeName>
</protein>
<organism>
    <name type="scientific">Mycobacterium leprae (strain TN)</name>
    <dbReference type="NCBI Taxonomy" id="272631"/>
    <lineage>
        <taxon>Bacteria</taxon>
        <taxon>Bacillati</taxon>
        <taxon>Actinomycetota</taxon>
        <taxon>Actinomycetes</taxon>
        <taxon>Mycobacteriales</taxon>
        <taxon>Mycobacteriaceae</taxon>
        <taxon>Mycobacterium</taxon>
    </lineage>
</organism>
<name>PYRH_MYCLE</name>